<dbReference type="EMBL" id="CP000435">
    <property type="protein sequence ID" value="ABI45036.1"/>
    <property type="molecule type" value="Genomic_DNA"/>
</dbReference>
<dbReference type="RefSeq" id="WP_011618063.1">
    <property type="nucleotide sequence ID" value="NC_008319.1"/>
</dbReference>
<dbReference type="SMR" id="Q0IE10"/>
<dbReference type="STRING" id="64471.sync_0074"/>
<dbReference type="KEGG" id="syg:sync_0074"/>
<dbReference type="eggNOG" id="COG0556">
    <property type="taxonomic scope" value="Bacteria"/>
</dbReference>
<dbReference type="HOGENOM" id="CLU_009621_2_1_3"/>
<dbReference type="OrthoDB" id="9806651at2"/>
<dbReference type="Proteomes" id="UP000001961">
    <property type="component" value="Chromosome"/>
</dbReference>
<dbReference type="GO" id="GO:0005737">
    <property type="term" value="C:cytoplasm"/>
    <property type="evidence" value="ECO:0007669"/>
    <property type="project" value="UniProtKB-SubCell"/>
</dbReference>
<dbReference type="GO" id="GO:0009380">
    <property type="term" value="C:excinuclease repair complex"/>
    <property type="evidence" value="ECO:0007669"/>
    <property type="project" value="InterPro"/>
</dbReference>
<dbReference type="GO" id="GO:0005524">
    <property type="term" value="F:ATP binding"/>
    <property type="evidence" value="ECO:0007669"/>
    <property type="project" value="UniProtKB-UniRule"/>
</dbReference>
<dbReference type="GO" id="GO:0016887">
    <property type="term" value="F:ATP hydrolysis activity"/>
    <property type="evidence" value="ECO:0007669"/>
    <property type="project" value="InterPro"/>
</dbReference>
<dbReference type="GO" id="GO:0003677">
    <property type="term" value="F:DNA binding"/>
    <property type="evidence" value="ECO:0007669"/>
    <property type="project" value="UniProtKB-UniRule"/>
</dbReference>
<dbReference type="GO" id="GO:0009381">
    <property type="term" value="F:excinuclease ABC activity"/>
    <property type="evidence" value="ECO:0007669"/>
    <property type="project" value="UniProtKB-UniRule"/>
</dbReference>
<dbReference type="GO" id="GO:0004386">
    <property type="term" value="F:helicase activity"/>
    <property type="evidence" value="ECO:0007669"/>
    <property type="project" value="UniProtKB-KW"/>
</dbReference>
<dbReference type="GO" id="GO:0006289">
    <property type="term" value="P:nucleotide-excision repair"/>
    <property type="evidence" value="ECO:0007669"/>
    <property type="project" value="UniProtKB-UniRule"/>
</dbReference>
<dbReference type="GO" id="GO:0009432">
    <property type="term" value="P:SOS response"/>
    <property type="evidence" value="ECO:0007669"/>
    <property type="project" value="UniProtKB-UniRule"/>
</dbReference>
<dbReference type="CDD" id="cd17916">
    <property type="entry name" value="DEXHc_UvrB"/>
    <property type="match status" value="1"/>
</dbReference>
<dbReference type="CDD" id="cd18790">
    <property type="entry name" value="SF2_C_UvrB"/>
    <property type="match status" value="1"/>
</dbReference>
<dbReference type="Gene3D" id="3.40.50.300">
    <property type="entry name" value="P-loop containing nucleotide triphosphate hydrolases"/>
    <property type="match status" value="3"/>
</dbReference>
<dbReference type="Gene3D" id="4.10.860.10">
    <property type="entry name" value="UVR domain"/>
    <property type="match status" value="1"/>
</dbReference>
<dbReference type="HAMAP" id="MF_00204">
    <property type="entry name" value="UvrB"/>
    <property type="match status" value="1"/>
</dbReference>
<dbReference type="InterPro" id="IPR006935">
    <property type="entry name" value="Helicase/UvrB_N"/>
</dbReference>
<dbReference type="InterPro" id="IPR014001">
    <property type="entry name" value="Helicase_ATP-bd"/>
</dbReference>
<dbReference type="InterPro" id="IPR001650">
    <property type="entry name" value="Helicase_C-like"/>
</dbReference>
<dbReference type="InterPro" id="IPR027417">
    <property type="entry name" value="P-loop_NTPase"/>
</dbReference>
<dbReference type="InterPro" id="IPR001943">
    <property type="entry name" value="UVR_dom"/>
</dbReference>
<dbReference type="InterPro" id="IPR036876">
    <property type="entry name" value="UVR_dom_sf"/>
</dbReference>
<dbReference type="InterPro" id="IPR004807">
    <property type="entry name" value="UvrB"/>
</dbReference>
<dbReference type="InterPro" id="IPR041471">
    <property type="entry name" value="UvrB_inter"/>
</dbReference>
<dbReference type="InterPro" id="IPR024759">
    <property type="entry name" value="UvrB_YAD/RRR_dom"/>
</dbReference>
<dbReference type="NCBIfam" id="NF003673">
    <property type="entry name" value="PRK05298.1"/>
    <property type="match status" value="1"/>
</dbReference>
<dbReference type="NCBIfam" id="TIGR00631">
    <property type="entry name" value="uvrb"/>
    <property type="match status" value="1"/>
</dbReference>
<dbReference type="PANTHER" id="PTHR24029">
    <property type="entry name" value="UVRABC SYSTEM PROTEIN B"/>
    <property type="match status" value="1"/>
</dbReference>
<dbReference type="PANTHER" id="PTHR24029:SF0">
    <property type="entry name" value="UVRABC SYSTEM PROTEIN B"/>
    <property type="match status" value="1"/>
</dbReference>
<dbReference type="Pfam" id="PF00271">
    <property type="entry name" value="Helicase_C"/>
    <property type="match status" value="1"/>
</dbReference>
<dbReference type="Pfam" id="PF04851">
    <property type="entry name" value="ResIII"/>
    <property type="match status" value="1"/>
</dbReference>
<dbReference type="Pfam" id="PF02151">
    <property type="entry name" value="UVR"/>
    <property type="match status" value="1"/>
</dbReference>
<dbReference type="Pfam" id="PF12344">
    <property type="entry name" value="UvrB"/>
    <property type="match status" value="1"/>
</dbReference>
<dbReference type="Pfam" id="PF17757">
    <property type="entry name" value="UvrB_inter"/>
    <property type="match status" value="1"/>
</dbReference>
<dbReference type="SMART" id="SM00487">
    <property type="entry name" value="DEXDc"/>
    <property type="match status" value="1"/>
</dbReference>
<dbReference type="SMART" id="SM00490">
    <property type="entry name" value="HELICc"/>
    <property type="match status" value="1"/>
</dbReference>
<dbReference type="SUPFAM" id="SSF46600">
    <property type="entry name" value="C-terminal UvrC-binding domain of UvrB"/>
    <property type="match status" value="1"/>
</dbReference>
<dbReference type="SUPFAM" id="SSF52540">
    <property type="entry name" value="P-loop containing nucleoside triphosphate hydrolases"/>
    <property type="match status" value="2"/>
</dbReference>
<dbReference type="PROSITE" id="PS51192">
    <property type="entry name" value="HELICASE_ATP_BIND_1"/>
    <property type="match status" value="1"/>
</dbReference>
<dbReference type="PROSITE" id="PS51194">
    <property type="entry name" value="HELICASE_CTER"/>
    <property type="match status" value="1"/>
</dbReference>
<dbReference type="PROSITE" id="PS50151">
    <property type="entry name" value="UVR"/>
    <property type="match status" value="1"/>
</dbReference>
<reference key="1">
    <citation type="journal article" date="2006" name="Proc. Natl. Acad. Sci. U.S.A.">
        <title>Genome sequence of Synechococcus CC9311: insights into adaptation to a coastal environment.</title>
        <authorList>
            <person name="Palenik B."/>
            <person name="Ren Q."/>
            <person name="Dupont C.L."/>
            <person name="Myers G.S."/>
            <person name="Heidelberg J.F."/>
            <person name="Badger J.H."/>
            <person name="Madupu R."/>
            <person name="Nelson W.C."/>
            <person name="Brinkac L.M."/>
            <person name="Dodson R.J."/>
            <person name="Durkin A.S."/>
            <person name="Daugherty S.C."/>
            <person name="Sullivan S.A."/>
            <person name="Khouri H."/>
            <person name="Mohamoud Y."/>
            <person name="Halpin R."/>
            <person name="Paulsen I.T."/>
        </authorList>
    </citation>
    <scope>NUCLEOTIDE SEQUENCE [LARGE SCALE GENOMIC DNA]</scope>
    <source>
        <strain>CC9311</strain>
    </source>
</reference>
<evidence type="ECO:0000255" key="1">
    <source>
        <dbReference type="HAMAP-Rule" id="MF_00204"/>
    </source>
</evidence>
<name>UVRB_SYNS3</name>
<organism>
    <name type="scientific">Synechococcus sp. (strain CC9311)</name>
    <dbReference type="NCBI Taxonomy" id="64471"/>
    <lineage>
        <taxon>Bacteria</taxon>
        <taxon>Bacillati</taxon>
        <taxon>Cyanobacteriota</taxon>
        <taxon>Cyanophyceae</taxon>
        <taxon>Synechococcales</taxon>
        <taxon>Synechococcaceae</taxon>
        <taxon>Synechococcus</taxon>
    </lineage>
</organism>
<accession>Q0IE10</accession>
<feature type="chain" id="PRO_1000077938" description="UvrABC system protein B">
    <location>
        <begin position="1"/>
        <end position="679"/>
    </location>
</feature>
<feature type="domain" description="Helicase ATP-binding" evidence="1">
    <location>
        <begin position="25"/>
        <end position="176"/>
    </location>
</feature>
<feature type="domain" description="Helicase C-terminal" evidence="1">
    <location>
        <begin position="429"/>
        <end position="591"/>
    </location>
</feature>
<feature type="domain" description="UVR" evidence="1">
    <location>
        <begin position="638"/>
        <end position="673"/>
    </location>
</feature>
<feature type="short sequence motif" description="Beta-hairpin">
    <location>
        <begin position="91"/>
        <end position="114"/>
    </location>
</feature>
<feature type="binding site" evidence="1">
    <location>
        <begin position="38"/>
        <end position="45"/>
    </location>
    <ligand>
        <name>ATP</name>
        <dbReference type="ChEBI" id="CHEBI:30616"/>
    </ligand>
</feature>
<proteinExistence type="inferred from homology"/>
<protein>
    <recommendedName>
        <fullName evidence="1">UvrABC system protein B</fullName>
        <shortName evidence="1">Protein UvrB</shortName>
    </recommendedName>
    <alternativeName>
        <fullName evidence="1">Excinuclease ABC subunit B</fullName>
    </alternativeName>
</protein>
<gene>
    <name evidence="1" type="primary">uvrB</name>
    <name type="ordered locus">sync_0074</name>
</gene>
<sequence length="679" mass="76027">MPAYELSAPYTPKGDQPTAISKLVEGVNGGERYQTLLGATGTGKTFTMANVIAQTGRPALVLAHNKTLAAQLCNELREFFPHNAVEYFISYYDYYQPEAYVPVSDTYIAKTASINEEIDMLRHSATRSLFERRDVIVVASISCIYGLGIPSEYLKAAVPFKVGETLNLRGSLRDLVNNQYSRNDTEAGRGRFRVKGDVLEIGPAYDDRLVRVELFGDEVEAIRYVDPTTGEILQSLDAISIYPAKHFVTPKERLNDAVKAIRSELKERLEFLNGEGKLLEAQRLEQRATYDLEMLQQIGYCNGVENYARHLAGREPGSAPECLIDYFPDDWLLIVDESHVTCSQLLAMYNGDQARKKVLIDHGFRLPSAADNRPLKSEEFWSKAKQTVFVSATPGNWEMEVSEGQVAEQVIRPTGVLDPLVEVRPTTGQVDDLLGEIRDRASKKQRVLVTTLTKRMAEDLTDYLAENKVRVRYLHSEIHSIERIEIIQDLRLGEYDVLVGVNLLREGLDLPEVSLVAILDADKEGFLRAQRSLIQTIGRAARHVEGKALLYAETMTDSMAKAIEETERRRKIQHTYNEKHGITPTAAGKKASNSILSFLELSRKLKADGPDADLVKVAGKAVQALEEDVDGLALDALPELIDQLELKMKESAKKLDFEEAANLRDRIKKLRQKLVGSSR</sequence>
<comment type="function">
    <text evidence="1">The UvrABC repair system catalyzes the recognition and processing of DNA lesions. A damage recognition complex composed of 2 UvrA and 2 UvrB subunits scans DNA for abnormalities. Upon binding of the UvrA(2)B(2) complex to a putative damaged site, the DNA wraps around one UvrB monomer. DNA wrap is dependent on ATP binding by UvrB and probably causes local melting of the DNA helix, facilitating insertion of UvrB beta-hairpin between the DNA strands. Then UvrB probes one DNA strand for the presence of a lesion. If a lesion is found the UvrA subunits dissociate and the UvrB-DNA preincision complex is formed. This complex is subsequently bound by UvrC and the second UvrB is released. If no lesion is found, the DNA wraps around the other UvrB subunit that will check the other stand for damage.</text>
</comment>
<comment type="subunit">
    <text evidence="1">Forms a heterotetramer with UvrA during the search for lesions. Interacts with UvrC in an incision complex.</text>
</comment>
<comment type="subcellular location">
    <subcellularLocation>
        <location evidence="1">Cytoplasm</location>
    </subcellularLocation>
</comment>
<comment type="domain">
    <text evidence="1">The beta-hairpin motif is involved in DNA binding.</text>
</comment>
<comment type="similarity">
    <text evidence="1">Belongs to the UvrB family.</text>
</comment>
<keyword id="KW-0067">ATP-binding</keyword>
<keyword id="KW-0963">Cytoplasm</keyword>
<keyword id="KW-0227">DNA damage</keyword>
<keyword id="KW-0228">DNA excision</keyword>
<keyword id="KW-0234">DNA repair</keyword>
<keyword id="KW-0267">Excision nuclease</keyword>
<keyword id="KW-0347">Helicase</keyword>
<keyword id="KW-0378">Hydrolase</keyword>
<keyword id="KW-0547">Nucleotide-binding</keyword>
<keyword id="KW-1185">Reference proteome</keyword>
<keyword id="KW-0742">SOS response</keyword>